<name>END3_ECOL6</name>
<accession>P0AB84</accession>
<accession>P20625</accession>
<sequence length="211" mass="23562">MNKAKRLEILTRLRENNPHPTTELNFSSPFELLIAVLLSAQATDVSVNKATAKLYPVANTPAAMLELGVEGVKTYIKTIGLYNSKAENIIKTCRILLEQHNGEVPEDRAALEALPGVGRKTANVVLNTAFGWPTIAVDTHIFRVCNRTQFAPGKNVEQVEEKLLKVVPAEFKVDCHHWLILHGRYTCIARKPRCGSCIIEDLCEYKEKVDI</sequence>
<evidence type="ECO:0000255" key="1">
    <source>
        <dbReference type="HAMAP-Rule" id="MF_00942"/>
    </source>
</evidence>
<proteinExistence type="inferred from homology"/>
<feature type="chain" id="PRO_0000102211" description="Endonuclease III">
    <location>
        <begin position="1"/>
        <end position="211"/>
    </location>
</feature>
<feature type="domain" description="HhH" evidence="1">
    <location>
        <begin position="108"/>
        <end position="127"/>
    </location>
</feature>
<feature type="binding site" evidence="1">
    <location>
        <position position="187"/>
    </location>
    <ligand>
        <name>[4Fe-4S] cluster</name>
        <dbReference type="ChEBI" id="CHEBI:49883"/>
    </ligand>
</feature>
<feature type="binding site" evidence="1">
    <location>
        <position position="194"/>
    </location>
    <ligand>
        <name>[4Fe-4S] cluster</name>
        <dbReference type="ChEBI" id="CHEBI:49883"/>
    </ligand>
</feature>
<feature type="binding site" evidence="1">
    <location>
        <position position="197"/>
    </location>
    <ligand>
        <name>[4Fe-4S] cluster</name>
        <dbReference type="ChEBI" id="CHEBI:49883"/>
    </ligand>
</feature>
<feature type="binding site">
    <location>
        <position position="203"/>
    </location>
    <ligand>
        <name>[4Fe-4S] cluster</name>
        <dbReference type="ChEBI" id="CHEBI:49883"/>
    </ligand>
</feature>
<reference key="1">
    <citation type="journal article" date="2002" name="Proc. Natl. Acad. Sci. U.S.A.">
        <title>Extensive mosaic structure revealed by the complete genome sequence of uropathogenic Escherichia coli.</title>
        <authorList>
            <person name="Welch R.A."/>
            <person name="Burland V."/>
            <person name="Plunkett G. III"/>
            <person name="Redford P."/>
            <person name="Roesch P."/>
            <person name="Rasko D."/>
            <person name="Buckles E.L."/>
            <person name="Liou S.-R."/>
            <person name="Boutin A."/>
            <person name="Hackett J."/>
            <person name="Stroud D."/>
            <person name="Mayhew G.F."/>
            <person name="Rose D.J."/>
            <person name="Zhou S."/>
            <person name="Schwartz D.C."/>
            <person name="Perna N.T."/>
            <person name="Mobley H.L.T."/>
            <person name="Donnenberg M.S."/>
            <person name="Blattner F.R."/>
        </authorList>
    </citation>
    <scope>NUCLEOTIDE SEQUENCE [LARGE SCALE GENOMIC DNA]</scope>
    <source>
        <strain>CFT073 / ATCC 700928 / UPEC</strain>
    </source>
</reference>
<organism>
    <name type="scientific">Escherichia coli O6:H1 (strain CFT073 / ATCC 700928 / UPEC)</name>
    <dbReference type="NCBI Taxonomy" id="199310"/>
    <lineage>
        <taxon>Bacteria</taxon>
        <taxon>Pseudomonadati</taxon>
        <taxon>Pseudomonadota</taxon>
        <taxon>Gammaproteobacteria</taxon>
        <taxon>Enterobacterales</taxon>
        <taxon>Enterobacteriaceae</taxon>
        <taxon>Escherichia</taxon>
    </lineage>
</organism>
<keyword id="KW-0004">4Fe-4S</keyword>
<keyword id="KW-0227">DNA damage</keyword>
<keyword id="KW-0234">DNA repair</keyword>
<keyword id="KW-0238">DNA-binding</keyword>
<keyword id="KW-0326">Glycosidase</keyword>
<keyword id="KW-0378">Hydrolase</keyword>
<keyword id="KW-0408">Iron</keyword>
<keyword id="KW-0411">Iron-sulfur</keyword>
<keyword id="KW-0456">Lyase</keyword>
<keyword id="KW-0479">Metal-binding</keyword>
<keyword id="KW-1185">Reference proteome</keyword>
<comment type="function">
    <text evidence="1">DNA repair enzyme that has both DNA N-glycosylase activity and AP-lyase activity. The DNA N-glycosylase activity releases various damaged pyrimidines from DNA by cleaving the N-glycosidic bond, leaving an AP (apurinic/apyrimidinic) site. The AP-lyase activity cleaves the phosphodiester bond 3' to the AP site by a beta-elimination, leaving a 3'-terminal unsaturated sugar and a product with a terminal 5'-phosphate.</text>
</comment>
<comment type="catalytic activity">
    <reaction evidence="1">
        <text>2'-deoxyribonucleotide-(2'-deoxyribose 5'-phosphate)-2'-deoxyribonucleotide-DNA = a 3'-end 2'-deoxyribonucleotide-(2,3-dehydro-2,3-deoxyribose 5'-phosphate)-DNA + a 5'-end 5'-phospho-2'-deoxyribonucleoside-DNA + H(+)</text>
        <dbReference type="Rhea" id="RHEA:66592"/>
        <dbReference type="Rhea" id="RHEA-COMP:13180"/>
        <dbReference type="Rhea" id="RHEA-COMP:16897"/>
        <dbReference type="Rhea" id="RHEA-COMP:17067"/>
        <dbReference type="ChEBI" id="CHEBI:15378"/>
        <dbReference type="ChEBI" id="CHEBI:136412"/>
        <dbReference type="ChEBI" id="CHEBI:157695"/>
        <dbReference type="ChEBI" id="CHEBI:167181"/>
        <dbReference type="EC" id="4.2.99.18"/>
    </reaction>
</comment>
<comment type="cofactor">
    <cofactor evidence="1">
        <name>[4Fe-4S] cluster</name>
        <dbReference type="ChEBI" id="CHEBI:49883"/>
    </cofactor>
    <text evidence="1">Binds 1 [4Fe-4S] cluster.</text>
</comment>
<comment type="similarity">
    <text evidence="1">Belongs to the Nth/MutY family.</text>
</comment>
<dbReference type="EC" id="4.2.99.18" evidence="1"/>
<dbReference type="EMBL" id="AE014075">
    <property type="protein sequence ID" value="AAN80485.1"/>
    <property type="molecule type" value="Genomic_DNA"/>
</dbReference>
<dbReference type="RefSeq" id="WP_001030339.1">
    <property type="nucleotide sequence ID" value="NZ_CP051263.1"/>
</dbReference>
<dbReference type="SMR" id="P0AB84"/>
<dbReference type="STRING" id="199310.c2025"/>
<dbReference type="GeneID" id="93775785"/>
<dbReference type="KEGG" id="ecc:c2025"/>
<dbReference type="eggNOG" id="COG0177">
    <property type="taxonomic scope" value="Bacteria"/>
</dbReference>
<dbReference type="HOGENOM" id="CLU_012862_3_0_6"/>
<dbReference type="BioCyc" id="ECOL199310:C2025-MONOMER"/>
<dbReference type="Proteomes" id="UP000001410">
    <property type="component" value="Chromosome"/>
</dbReference>
<dbReference type="GO" id="GO:0051539">
    <property type="term" value="F:4 iron, 4 sulfur cluster binding"/>
    <property type="evidence" value="ECO:0007669"/>
    <property type="project" value="UniProtKB-UniRule"/>
</dbReference>
<dbReference type="GO" id="GO:0140078">
    <property type="term" value="F:class I DNA-(apurinic or apyrimidinic site) endonuclease activity"/>
    <property type="evidence" value="ECO:0007669"/>
    <property type="project" value="UniProtKB-EC"/>
</dbReference>
<dbReference type="GO" id="GO:0003677">
    <property type="term" value="F:DNA binding"/>
    <property type="evidence" value="ECO:0007669"/>
    <property type="project" value="UniProtKB-UniRule"/>
</dbReference>
<dbReference type="GO" id="GO:0019104">
    <property type="term" value="F:DNA N-glycosylase activity"/>
    <property type="evidence" value="ECO:0007669"/>
    <property type="project" value="UniProtKB-UniRule"/>
</dbReference>
<dbReference type="GO" id="GO:0046872">
    <property type="term" value="F:metal ion binding"/>
    <property type="evidence" value="ECO:0007669"/>
    <property type="project" value="UniProtKB-KW"/>
</dbReference>
<dbReference type="GO" id="GO:0006285">
    <property type="term" value="P:base-excision repair, AP site formation"/>
    <property type="evidence" value="ECO:0007669"/>
    <property type="project" value="TreeGrafter"/>
</dbReference>
<dbReference type="CDD" id="cd00056">
    <property type="entry name" value="ENDO3c"/>
    <property type="match status" value="1"/>
</dbReference>
<dbReference type="FunFam" id="1.10.1670.10:FF:000001">
    <property type="entry name" value="Endonuclease III"/>
    <property type="match status" value="1"/>
</dbReference>
<dbReference type="FunFam" id="1.10.340.30:FF:000001">
    <property type="entry name" value="Endonuclease III"/>
    <property type="match status" value="1"/>
</dbReference>
<dbReference type="Gene3D" id="1.10.1670.10">
    <property type="entry name" value="Helix-hairpin-Helix base-excision DNA repair enzymes (C-terminal)"/>
    <property type="match status" value="1"/>
</dbReference>
<dbReference type="Gene3D" id="1.10.340.30">
    <property type="entry name" value="Hypothetical protein, domain 2"/>
    <property type="match status" value="1"/>
</dbReference>
<dbReference type="HAMAP" id="MF_00942">
    <property type="entry name" value="Nth"/>
    <property type="match status" value="1"/>
</dbReference>
<dbReference type="InterPro" id="IPR011257">
    <property type="entry name" value="DNA_glycosylase"/>
</dbReference>
<dbReference type="InterPro" id="IPR004036">
    <property type="entry name" value="Endonuclease-III-like_CS2"/>
</dbReference>
<dbReference type="InterPro" id="IPR003651">
    <property type="entry name" value="Endonuclease3_FeS-loop_motif"/>
</dbReference>
<dbReference type="InterPro" id="IPR004035">
    <property type="entry name" value="Endouclease-III_FeS-bd_BS"/>
</dbReference>
<dbReference type="InterPro" id="IPR003265">
    <property type="entry name" value="HhH-GPD_domain"/>
</dbReference>
<dbReference type="InterPro" id="IPR023170">
    <property type="entry name" value="HhH_base_excis_C"/>
</dbReference>
<dbReference type="InterPro" id="IPR000445">
    <property type="entry name" value="HhH_motif"/>
</dbReference>
<dbReference type="InterPro" id="IPR005759">
    <property type="entry name" value="Nth"/>
</dbReference>
<dbReference type="NCBIfam" id="TIGR01083">
    <property type="entry name" value="nth"/>
    <property type="match status" value="1"/>
</dbReference>
<dbReference type="NCBIfam" id="NF007978">
    <property type="entry name" value="PRK10702.1"/>
    <property type="match status" value="1"/>
</dbReference>
<dbReference type="PANTHER" id="PTHR10359">
    <property type="entry name" value="A/G-SPECIFIC ADENINE GLYCOSYLASE/ENDONUCLEASE III"/>
    <property type="match status" value="1"/>
</dbReference>
<dbReference type="PANTHER" id="PTHR10359:SF18">
    <property type="entry name" value="ENDONUCLEASE III"/>
    <property type="match status" value="1"/>
</dbReference>
<dbReference type="Pfam" id="PF10576">
    <property type="entry name" value="EndIII_4Fe-2S"/>
    <property type="match status" value="1"/>
</dbReference>
<dbReference type="Pfam" id="PF00633">
    <property type="entry name" value="HHH"/>
    <property type="match status" value="1"/>
</dbReference>
<dbReference type="Pfam" id="PF00730">
    <property type="entry name" value="HhH-GPD"/>
    <property type="match status" value="1"/>
</dbReference>
<dbReference type="PIRSF" id="PIRSF001435">
    <property type="entry name" value="Nth"/>
    <property type="match status" value="1"/>
</dbReference>
<dbReference type="SMART" id="SM00478">
    <property type="entry name" value="ENDO3c"/>
    <property type="match status" value="1"/>
</dbReference>
<dbReference type="SMART" id="SM00525">
    <property type="entry name" value="FES"/>
    <property type="match status" value="1"/>
</dbReference>
<dbReference type="SUPFAM" id="SSF48150">
    <property type="entry name" value="DNA-glycosylase"/>
    <property type="match status" value="1"/>
</dbReference>
<dbReference type="PROSITE" id="PS00764">
    <property type="entry name" value="ENDONUCLEASE_III_1"/>
    <property type="match status" value="1"/>
</dbReference>
<dbReference type="PROSITE" id="PS01155">
    <property type="entry name" value="ENDONUCLEASE_III_2"/>
    <property type="match status" value="1"/>
</dbReference>
<gene>
    <name evidence="1" type="primary">nth</name>
    <name type="ordered locus">c2025</name>
</gene>
<protein>
    <recommendedName>
        <fullName evidence="1">Endonuclease III</fullName>
        <ecNumber evidence="1">4.2.99.18</ecNumber>
    </recommendedName>
    <alternativeName>
        <fullName evidence="1">DNA-(apurinic or apyrimidinic site) lyase</fullName>
    </alternativeName>
</protein>